<dbReference type="EC" id="2.1.1.166" evidence="1"/>
<dbReference type="EMBL" id="AE008923">
    <property type="protein sequence ID" value="AAM36598.1"/>
    <property type="molecule type" value="Genomic_DNA"/>
</dbReference>
<dbReference type="RefSeq" id="WP_005915021.1">
    <property type="nucleotide sequence ID" value="NC_003919.1"/>
</dbReference>
<dbReference type="SMR" id="Q8PLQ8"/>
<dbReference type="GeneID" id="97510106"/>
<dbReference type="KEGG" id="xac:XAC1731"/>
<dbReference type="eggNOG" id="COG0293">
    <property type="taxonomic scope" value="Bacteria"/>
</dbReference>
<dbReference type="HOGENOM" id="CLU_009422_4_0_6"/>
<dbReference type="Proteomes" id="UP000000576">
    <property type="component" value="Chromosome"/>
</dbReference>
<dbReference type="GO" id="GO:0005737">
    <property type="term" value="C:cytoplasm"/>
    <property type="evidence" value="ECO:0007669"/>
    <property type="project" value="UniProtKB-SubCell"/>
</dbReference>
<dbReference type="GO" id="GO:0008650">
    <property type="term" value="F:rRNA (uridine-2'-O-)-methyltransferase activity"/>
    <property type="evidence" value="ECO:0007669"/>
    <property type="project" value="UniProtKB-UniRule"/>
</dbReference>
<dbReference type="FunFam" id="3.40.50.150:FF:000005">
    <property type="entry name" value="Ribosomal RNA large subunit methyltransferase E"/>
    <property type="match status" value="1"/>
</dbReference>
<dbReference type="Gene3D" id="3.40.50.150">
    <property type="entry name" value="Vaccinia Virus protein VP39"/>
    <property type="match status" value="1"/>
</dbReference>
<dbReference type="HAMAP" id="MF_01547">
    <property type="entry name" value="RNA_methyltr_E"/>
    <property type="match status" value="1"/>
</dbReference>
<dbReference type="InterPro" id="IPR050082">
    <property type="entry name" value="RNA_methyltr_RlmE"/>
</dbReference>
<dbReference type="InterPro" id="IPR002877">
    <property type="entry name" value="RNA_MeTrfase_FtsJ_dom"/>
</dbReference>
<dbReference type="InterPro" id="IPR015507">
    <property type="entry name" value="rRNA-MeTfrase_E"/>
</dbReference>
<dbReference type="InterPro" id="IPR029063">
    <property type="entry name" value="SAM-dependent_MTases_sf"/>
</dbReference>
<dbReference type="NCBIfam" id="NF008390">
    <property type="entry name" value="PRK11188.1"/>
    <property type="match status" value="1"/>
</dbReference>
<dbReference type="PANTHER" id="PTHR10920">
    <property type="entry name" value="RIBOSOMAL RNA METHYLTRANSFERASE"/>
    <property type="match status" value="1"/>
</dbReference>
<dbReference type="PANTHER" id="PTHR10920:SF18">
    <property type="entry name" value="RRNA METHYLTRANSFERASE 2, MITOCHONDRIAL"/>
    <property type="match status" value="1"/>
</dbReference>
<dbReference type="Pfam" id="PF01728">
    <property type="entry name" value="FtsJ"/>
    <property type="match status" value="1"/>
</dbReference>
<dbReference type="PIRSF" id="PIRSF005461">
    <property type="entry name" value="23S_rRNA_mtase"/>
    <property type="match status" value="1"/>
</dbReference>
<dbReference type="SUPFAM" id="SSF53335">
    <property type="entry name" value="S-adenosyl-L-methionine-dependent methyltransferases"/>
    <property type="match status" value="1"/>
</dbReference>
<protein>
    <recommendedName>
        <fullName evidence="1">Ribosomal RNA large subunit methyltransferase E</fullName>
        <ecNumber evidence="1">2.1.1.166</ecNumber>
    </recommendedName>
    <alternativeName>
        <fullName evidence="1">23S rRNA Um2552 methyltransferase</fullName>
    </alternativeName>
    <alternativeName>
        <fullName evidence="1">rRNA (uridine-2'-O-)-methyltransferase</fullName>
    </alternativeName>
</protein>
<reference key="1">
    <citation type="journal article" date="2002" name="Nature">
        <title>Comparison of the genomes of two Xanthomonas pathogens with differing host specificities.</title>
        <authorList>
            <person name="da Silva A.C.R."/>
            <person name="Ferro J.A."/>
            <person name="Reinach F.C."/>
            <person name="Farah C.S."/>
            <person name="Furlan L.R."/>
            <person name="Quaggio R.B."/>
            <person name="Monteiro-Vitorello C.B."/>
            <person name="Van Sluys M.A."/>
            <person name="Almeida N.F. Jr."/>
            <person name="Alves L.M.C."/>
            <person name="do Amaral A.M."/>
            <person name="Bertolini M.C."/>
            <person name="Camargo L.E.A."/>
            <person name="Camarotte G."/>
            <person name="Cannavan F."/>
            <person name="Cardozo J."/>
            <person name="Chambergo F."/>
            <person name="Ciapina L.P."/>
            <person name="Cicarelli R.M.B."/>
            <person name="Coutinho L.L."/>
            <person name="Cursino-Santos J.R."/>
            <person name="El-Dorry H."/>
            <person name="Faria J.B."/>
            <person name="Ferreira A.J.S."/>
            <person name="Ferreira R.C.C."/>
            <person name="Ferro M.I.T."/>
            <person name="Formighieri E.F."/>
            <person name="Franco M.C."/>
            <person name="Greggio C.C."/>
            <person name="Gruber A."/>
            <person name="Katsuyama A.M."/>
            <person name="Kishi L.T."/>
            <person name="Leite R.P."/>
            <person name="Lemos E.G.M."/>
            <person name="Lemos M.V.F."/>
            <person name="Locali E.C."/>
            <person name="Machado M.A."/>
            <person name="Madeira A.M.B.N."/>
            <person name="Martinez-Rossi N.M."/>
            <person name="Martins E.C."/>
            <person name="Meidanis J."/>
            <person name="Menck C.F.M."/>
            <person name="Miyaki C.Y."/>
            <person name="Moon D.H."/>
            <person name="Moreira L.M."/>
            <person name="Novo M.T.M."/>
            <person name="Okura V.K."/>
            <person name="Oliveira M.C."/>
            <person name="Oliveira V.R."/>
            <person name="Pereira H.A."/>
            <person name="Rossi A."/>
            <person name="Sena J.A.D."/>
            <person name="Silva C."/>
            <person name="de Souza R.F."/>
            <person name="Spinola L.A.F."/>
            <person name="Takita M.A."/>
            <person name="Tamura R.E."/>
            <person name="Teixeira E.C."/>
            <person name="Tezza R.I.D."/>
            <person name="Trindade dos Santos M."/>
            <person name="Truffi D."/>
            <person name="Tsai S.M."/>
            <person name="White F.F."/>
            <person name="Setubal J.C."/>
            <person name="Kitajima J.P."/>
        </authorList>
    </citation>
    <scope>NUCLEOTIDE SEQUENCE [LARGE SCALE GENOMIC DNA]</scope>
    <source>
        <strain>306</strain>
    </source>
</reference>
<proteinExistence type="inferred from homology"/>
<name>RLME_XANAC</name>
<sequence length="210" mass="23454">MPSRSKSSQRWLKEHFADPYVKKAQAEGMRSRAAYKLEELLQRDRLLKPGMVVVDLGAAPGGWSQQVRKSMGDSGRVVALDILDMPALAGVEFLHGDFREQAVLSQFEAMLGDVPVDLVLSDMAPNKSGMDAVDQPRMMHLAELAMEFADTHLKPGGAFLIKLFQGVGSDDYIRELRRRYEKVTIRKPAASRKRSPEVYALGQGKRVQIK</sequence>
<keyword id="KW-0963">Cytoplasm</keyword>
<keyword id="KW-0489">Methyltransferase</keyword>
<keyword id="KW-0698">rRNA processing</keyword>
<keyword id="KW-0949">S-adenosyl-L-methionine</keyword>
<keyword id="KW-0808">Transferase</keyword>
<gene>
    <name evidence="1" type="primary">rlmE</name>
    <name evidence="1" type="synonym">ftsJ</name>
    <name evidence="1" type="synonym">rrmJ</name>
    <name type="ordered locus">XAC1731</name>
</gene>
<accession>Q8PLQ8</accession>
<feature type="chain" id="PRO_0000155554" description="Ribosomal RNA large subunit methyltransferase E">
    <location>
        <begin position="1"/>
        <end position="210"/>
    </location>
</feature>
<feature type="active site" description="Proton acceptor" evidence="1">
    <location>
        <position position="162"/>
    </location>
</feature>
<feature type="binding site" evidence="1">
    <location>
        <position position="61"/>
    </location>
    <ligand>
        <name>S-adenosyl-L-methionine</name>
        <dbReference type="ChEBI" id="CHEBI:59789"/>
    </ligand>
</feature>
<feature type="binding site" evidence="1">
    <location>
        <position position="63"/>
    </location>
    <ligand>
        <name>S-adenosyl-L-methionine</name>
        <dbReference type="ChEBI" id="CHEBI:59789"/>
    </ligand>
</feature>
<feature type="binding site" evidence="1">
    <location>
        <position position="81"/>
    </location>
    <ligand>
        <name>S-adenosyl-L-methionine</name>
        <dbReference type="ChEBI" id="CHEBI:59789"/>
    </ligand>
</feature>
<feature type="binding site" evidence="1">
    <location>
        <position position="97"/>
    </location>
    <ligand>
        <name>S-adenosyl-L-methionine</name>
        <dbReference type="ChEBI" id="CHEBI:59789"/>
    </ligand>
</feature>
<feature type="binding site" evidence="1">
    <location>
        <position position="122"/>
    </location>
    <ligand>
        <name>S-adenosyl-L-methionine</name>
        <dbReference type="ChEBI" id="CHEBI:59789"/>
    </ligand>
</feature>
<evidence type="ECO:0000255" key="1">
    <source>
        <dbReference type="HAMAP-Rule" id="MF_01547"/>
    </source>
</evidence>
<organism>
    <name type="scientific">Xanthomonas axonopodis pv. citri (strain 306)</name>
    <dbReference type="NCBI Taxonomy" id="190486"/>
    <lineage>
        <taxon>Bacteria</taxon>
        <taxon>Pseudomonadati</taxon>
        <taxon>Pseudomonadota</taxon>
        <taxon>Gammaproteobacteria</taxon>
        <taxon>Lysobacterales</taxon>
        <taxon>Lysobacteraceae</taxon>
        <taxon>Xanthomonas</taxon>
    </lineage>
</organism>
<comment type="function">
    <text evidence="1">Specifically methylates the uridine in position 2552 of 23S rRNA at the 2'-O position of the ribose in the fully assembled 50S ribosomal subunit.</text>
</comment>
<comment type="catalytic activity">
    <reaction evidence="1">
        <text>uridine(2552) in 23S rRNA + S-adenosyl-L-methionine = 2'-O-methyluridine(2552) in 23S rRNA + S-adenosyl-L-homocysteine + H(+)</text>
        <dbReference type="Rhea" id="RHEA:42720"/>
        <dbReference type="Rhea" id="RHEA-COMP:10202"/>
        <dbReference type="Rhea" id="RHEA-COMP:10203"/>
        <dbReference type="ChEBI" id="CHEBI:15378"/>
        <dbReference type="ChEBI" id="CHEBI:57856"/>
        <dbReference type="ChEBI" id="CHEBI:59789"/>
        <dbReference type="ChEBI" id="CHEBI:65315"/>
        <dbReference type="ChEBI" id="CHEBI:74478"/>
        <dbReference type="EC" id="2.1.1.166"/>
    </reaction>
</comment>
<comment type="subcellular location">
    <subcellularLocation>
        <location evidence="1">Cytoplasm</location>
    </subcellularLocation>
</comment>
<comment type="similarity">
    <text evidence="1">Belongs to the class I-like SAM-binding methyltransferase superfamily. RNA methyltransferase RlmE family.</text>
</comment>